<accession>Q8KA06</accession>
<feature type="chain" id="PRO_0000072831" description="Glycine--tRNA ligase alpha subunit">
    <location>
        <begin position="1"/>
        <end position="292"/>
    </location>
</feature>
<gene>
    <name evidence="1" type="primary">glyQ</name>
    <name type="ordered locus">BUsg_128</name>
</gene>
<sequence>MENNHNNFSNLITILQEYWTEQECAIFQPLDLPIGAGTFHNTTFFGTIGPEPIRAAYIQSCRRPTDGRYGKNPNRLQHYYQFQVIIKPPLKNIQNIYLKSLNLLKISEKRNDIRFVEDNWENPTLGAWGIGWEVWLNGMEITQFTYFQQVGGLECNPVTVEITYGLERIAMHMQNQSNVYDLIWSENKFKKITYGDIFQQNEIEQSKYNFEYSDINLLFEYFQKYIFEAKKLIELKKPLLLVSYEKILQASHVFNLLDARKAISSSERQNYILKIRKLAKKIAQEYLYSRKK</sequence>
<comment type="catalytic activity">
    <reaction evidence="1">
        <text>tRNA(Gly) + glycine + ATP = glycyl-tRNA(Gly) + AMP + diphosphate</text>
        <dbReference type="Rhea" id="RHEA:16013"/>
        <dbReference type="Rhea" id="RHEA-COMP:9664"/>
        <dbReference type="Rhea" id="RHEA-COMP:9683"/>
        <dbReference type="ChEBI" id="CHEBI:30616"/>
        <dbReference type="ChEBI" id="CHEBI:33019"/>
        <dbReference type="ChEBI" id="CHEBI:57305"/>
        <dbReference type="ChEBI" id="CHEBI:78442"/>
        <dbReference type="ChEBI" id="CHEBI:78522"/>
        <dbReference type="ChEBI" id="CHEBI:456215"/>
        <dbReference type="EC" id="6.1.1.14"/>
    </reaction>
</comment>
<comment type="subunit">
    <text evidence="1">Tetramer of two alpha and two beta subunits.</text>
</comment>
<comment type="subcellular location">
    <subcellularLocation>
        <location evidence="1">Cytoplasm</location>
    </subcellularLocation>
</comment>
<comment type="similarity">
    <text evidence="1">Belongs to the class-II aminoacyl-tRNA synthetase family.</text>
</comment>
<organism>
    <name type="scientific">Buchnera aphidicola subsp. Schizaphis graminum (strain Sg)</name>
    <dbReference type="NCBI Taxonomy" id="198804"/>
    <lineage>
        <taxon>Bacteria</taxon>
        <taxon>Pseudomonadati</taxon>
        <taxon>Pseudomonadota</taxon>
        <taxon>Gammaproteobacteria</taxon>
        <taxon>Enterobacterales</taxon>
        <taxon>Erwiniaceae</taxon>
        <taxon>Buchnera</taxon>
    </lineage>
</organism>
<name>SYGA_BUCAP</name>
<keyword id="KW-0030">Aminoacyl-tRNA synthetase</keyword>
<keyword id="KW-0067">ATP-binding</keyword>
<keyword id="KW-0963">Cytoplasm</keyword>
<keyword id="KW-0436">Ligase</keyword>
<keyword id="KW-0547">Nucleotide-binding</keyword>
<keyword id="KW-0648">Protein biosynthesis</keyword>
<reference key="1">
    <citation type="journal article" date="2002" name="Science">
        <title>50 million years of genomic stasis in endosymbiotic bacteria.</title>
        <authorList>
            <person name="Tamas I."/>
            <person name="Klasson L."/>
            <person name="Canbaeck B."/>
            <person name="Naeslund A.K."/>
            <person name="Eriksson A.-S."/>
            <person name="Wernegreen J.J."/>
            <person name="Sandstroem J.P."/>
            <person name="Moran N.A."/>
            <person name="Andersson S.G.E."/>
        </authorList>
    </citation>
    <scope>NUCLEOTIDE SEQUENCE [LARGE SCALE GENOMIC DNA]</scope>
    <source>
        <strain>Sg</strain>
    </source>
</reference>
<dbReference type="EC" id="6.1.1.14" evidence="1"/>
<dbReference type="EMBL" id="AE013218">
    <property type="protein sequence ID" value="AAM67696.1"/>
    <property type="molecule type" value="Genomic_DNA"/>
</dbReference>
<dbReference type="RefSeq" id="WP_011053663.1">
    <property type="nucleotide sequence ID" value="NC_004061.1"/>
</dbReference>
<dbReference type="SMR" id="Q8KA06"/>
<dbReference type="STRING" id="198804.BUsg_128"/>
<dbReference type="GeneID" id="93003598"/>
<dbReference type="KEGG" id="bas:BUsg_128"/>
<dbReference type="eggNOG" id="COG0752">
    <property type="taxonomic scope" value="Bacteria"/>
</dbReference>
<dbReference type="HOGENOM" id="CLU_057066_1_0_6"/>
<dbReference type="Proteomes" id="UP000000416">
    <property type="component" value="Chromosome"/>
</dbReference>
<dbReference type="GO" id="GO:0005829">
    <property type="term" value="C:cytosol"/>
    <property type="evidence" value="ECO:0007669"/>
    <property type="project" value="TreeGrafter"/>
</dbReference>
<dbReference type="GO" id="GO:0005524">
    <property type="term" value="F:ATP binding"/>
    <property type="evidence" value="ECO:0007669"/>
    <property type="project" value="UniProtKB-UniRule"/>
</dbReference>
<dbReference type="GO" id="GO:0004820">
    <property type="term" value="F:glycine-tRNA ligase activity"/>
    <property type="evidence" value="ECO:0007669"/>
    <property type="project" value="UniProtKB-UniRule"/>
</dbReference>
<dbReference type="GO" id="GO:0006426">
    <property type="term" value="P:glycyl-tRNA aminoacylation"/>
    <property type="evidence" value="ECO:0007669"/>
    <property type="project" value="UniProtKB-UniRule"/>
</dbReference>
<dbReference type="FunFam" id="3.30.930.10:FF:000006">
    <property type="entry name" value="Glycine--tRNA ligase alpha subunit"/>
    <property type="match status" value="1"/>
</dbReference>
<dbReference type="Gene3D" id="3.30.930.10">
    <property type="entry name" value="Bira Bifunctional Protein, Domain 2"/>
    <property type="match status" value="1"/>
</dbReference>
<dbReference type="Gene3D" id="1.20.58.180">
    <property type="entry name" value="Class II aaRS and biotin synthetases, domain 2"/>
    <property type="match status" value="1"/>
</dbReference>
<dbReference type="HAMAP" id="MF_00254">
    <property type="entry name" value="Gly_tRNA_synth_alpha"/>
    <property type="match status" value="1"/>
</dbReference>
<dbReference type="InterPro" id="IPR045864">
    <property type="entry name" value="aa-tRNA-synth_II/BPL/LPL"/>
</dbReference>
<dbReference type="InterPro" id="IPR006194">
    <property type="entry name" value="Gly-tRNA-synth_heterodimer"/>
</dbReference>
<dbReference type="InterPro" id="IPR002310">
    <property type="entry name" value="Gly-tRNA_ligase_asu"/>
</dbReference>
<dbReference type="NCBIfam" id="TIGR00388">
    <property type="entry name" value="glyQ"/>
    <property type="match status" value="1"/>
</dbReference>
<dbReference type="NCBIfam" id="NF006827">
    <property type="entry name" value="PRK09348.1"/>
    <property type="match status" value="1"/>
</dbReference>
<dbReference type="PANTHER" id="PTHR30075:SF2">
    <property type="entry name" value="GLYCINE--TRNA LIGASE, CHLOROPLASTIC_MITOCHONDRIAL 2"/>
    <property type="match status" value="1"/>
</dbReference>
<dbReference type="PANTHER" id="PTHR30075">
    <property type="entry name" value="GLYCYL-TRNA SYNTHETASE"/>
    <property type="match status" value="1"/>
</dbReference>
<dbReference type="Pfam" id="PF02091">
    <property type="entry name" value="tRNA-synt_2e"/>
    <property type="match status" value="1"/>
</dbReference>
<dbReference type="PRINTS" id="PR01044">
    <property type="entry name" value="TRNASYNTHGA"/>
</dbReference>
<dbReference type="SUPFAM" id="SSF55681">
    <property type="entry name" value="Class II aaRS and biotin synthetases"/>
    <property type="match status" value="1"/>
</dbReference>
<dbReference type="PROSITE" id="PS50861">
    <property type="entry name" value="AA_TRNA_LIGASE_II_GLYAB"/>
    <property type="match status" value="1"/>
</dbReference>
<protein>
    <recommendedName>
        <fullName evidence="1">Glycine--tRNA ligase alpha subunit</fullName>
        <ecNumber evidence="1">6.1.1.14</ecNumber>
    </recommendedName>
    <alternativeName>
        <fullName evidence="1">Glycyl-tRNA synthetase alpha subunit</fullName>
        <shortName evidence="1">GlyRS</shortName>
    </alternativeName>
</protein>
<evidence type="ECO:0000255" key="1">
    <source>
        <dbReference type="HAMAP-Rule" id="MF_00254"/>
    </source>
</evidence>
<proteinExistence type="inferred from homology"/>